<feature type="chain" id="PRO_0000292945" description="DNA replication licensing factor MCM3 homolog 2">
    <location>
        <begin position="1"/>
        <end position="768"/>
    </location>
</feature>
<feature type="domain" description="MCM">
    <location>
        <begin position="290"/>
        <end position="497"/>
    </location>
</feature>
<feature type="region of interest" description="Disordered" evidence="3">
    <location>
        <begin position="661"/>
        <end position="689"/>
    </location>
</feature>
<feature type="short sequence motif" description="Arginine finger">
    <location>
        <begin position="472"/>
        <end position="475"/>
    </location>
</feature>
<feature type="compositionally biased region" description="Basic and acidic residues" evidence="3">
    <location>
        <begin position="661"/>
        <end position="670"/>
    </location>
</feature>
<feature type="compositionally biased region" description="Gly residues" evidence="3">
    <location>
        <begin position="672"/>
        <end position="682"/>
    </location>
</feature>
<feature type="binding site" evidence="2">
    <location>
        <begin position="340"/>
        <end position="347"/>
    </location>
    <ligand>
        <name>ATP</name>
        <dbReference type="ChEBI" id="CHEBI:30616"/>
    </ligand>
</feature>
<accession>Q9SX04</accession>
<proteinExistence type="evidence at transcript level"/>
<keyword id="KW-0067">ATP-binding</keyword>
<keyword id="KW-0131">Cell cycle</keyword>
<keyword id="KW-0235">DNA replication</keyword>
<keyword id="KW-0238">DNA-binding</keyword>
<keyword id="KW-0347">Helicase</keyword>
<keyword id="KW-0378">Hydrolase</keyword>
<keyword id="KW-0547">Nucleotide-binding</keyword>
<keyword id="KW-0539">Nucleus</keyword>
<keyword id="KW-1185">Reference proteome</keyword>
<organism>
    <name type="scientific">Zea mays</name>
    <name type="common">Maize</name>
    <dbReference type="NCBI Taxonomy" id="4577"/>
    <lineage>
        <taxon>Eukaryota</taxon>
        <taxon>Viridiplantae</taxon>
        <taxon>Streptophyta</taxon>
        <taxon>Embryophyta</taxon>
        <taxon>Tracheophyta</taxon>
        <taxon>Spermatophyta</taxon>
        <taxon>Magnoliopsida</taxon>
        <taxon>Liliopsida</taxon>
        <taxon>Poales</taxon>
        <taxon>Poaceae</taxon>
        <taxon>PACMAD clade</taxon>
        <taxon>Panicoideae</taxon>
        <taxon>Andropogonodae</taxon>
        <taxon>Andropogoneae</taxon>
        <taxon>Tripsacinae</taxon>
        <taxon>Zea</taxon>
    </lineage>
</organism>
<evidence type="ECO:0000250" key="1"/>
<evidence type="ECO:0000255" key="2"/>
<evidence type="ECO:0000256" key="3">
    <source>
        <dbReference type="SAM" id="MobiDB-lite"/>
    </source>
</evidence>
<evidence type="ECO:0000305" key="4"/>
<dbReference type="EC" id="3.6.4.12"/>
<dbReference type="EMBL" id="AF073330">
    <property type="protein sequence ID" value="AAD48086.1"/>
    <property type="molecule type" value="mRNA"/>
</dbReference>
<dbReference type="SMR" id="Q9SX04"/>
<dbReference type="FunCoup" id="Q9SX04">
    <property type="interactions" value="2966"/>
</dbReference>
<dbReference type="STRING" id="4577.Q9SX04"/>
<dbReference type="PaxDb" id="4577-GRMZM2G100639_P01"/>
<dbReference type="EnsemblPlants" id="Zm00001eb290510_T001">
    <property type="protein sequence ID" value="Zm00001eb290510_P001"/>
    <property type="gene ID" value="Zm00001eb290510"/>
</dbReference>
<dbReference type="GeneID" id="542738"/>
<dbReference type="Gramene" id="Zm00001eb290510_T001">
    <property type="protein sequence ID" value="Zm00001eb290510_P001"/>
    <property type="gene ID" value="Zm00001eb290510"/>
</dbReference>
<dbReference type="KEGG" id="zma:542738"/>
<dbReference type="MaizeGDB" id="131629"/>
<dbReference type="eggNOG" id="KOG0479">
    <property type="taxonomic scope" value="Eukaryota"/>
</dbReference>
<dbReference type="HOGENOM" id="CLU_000995_6_0_1"/>
<dbReference type="InParanoid" id="Q9SX04"/>
<dbReference type="OrthoDB" id="1882346at2759"/>
<dbReference type="Proteomes" id="UP000007305">
    <property type="component" value="Chromosome 6"/>
</dbReference>
<dbReference type="ExpressionAtlas" id="Q9SX04">
    <property type="expression patterns" value="baseline and differential"/>
</dbReference>
<dbReference type="GO" id="GO:0042555">
    <property type="term" value="C:MCM complex"/>
    <property type="evidence" value="ECO:0000318"/>
    <property type="project" value="GO_Central"/>
</dbReference>
<dbReference type="GO" id="GO:0005634">
    <property type="term" value="C:nucleus"/>
    <property type="evidence" value="ECO:0000318"/>
    <property type="project" value="GO_Central"/>
</dbReference>
<dbReference type="GO" id="GO:0005524">
    <property type="term" value="F:ATP binding"/>
    <property type="evidence" value="ECO:0007669"/>
    <property type="project" value="UniProtKB-KW"/>
</dbReference>
<dbReference type="GO" id="GO:0016887">
    <property type="term" value="F:ATP hydrolysis activity"/>
    <property type="evidence" value="ECO:0007669"/>
    <property type="project" value="InterPro"/>
</dbReference>
<dbReference type="GO" id="GO:0004386">
    <property type="term" value="F:helicase activity"/>
    <property type="evidence" value="ECO:0007669"/>
    <property type="project" value="UniProtKB-KW"/>
</dbReference>
<dbReference type="GO" id="GO:0003697">
    <property type="term" value="F:single-stranded DNA binding"/>
    <property type="evidence" value="ECO:0000318"/>
    <property type="project" value="GO_Central"/>
</dbReference>
<dbReference type="GO" id="GO:0006271">
    <property type="term" value="P:DNA strand elongation involved in DNA replication"/>
    <property type="evidence" value="ECO:0000318"/>
    <property type="project" value="GO_Central"/>
</dbReference>
<dbReference type="GO" id="GO:0000727">
    <property type="term" value="P:double-strand break repair via break-induced replication"/>
    <property type="evidence" value="ECO:0000318"/>
    <property type="project" value="GO_Central"/>
</dbReference>
<dbReference type="GO" id="GO:1902975">
    <property type="term" value="P:mitotic DNA replication initiation"/>
    <property type="evidence" value="ECO:0000318"/>
    <property type="project" value="GO_Central"/>
</dbReference>
<dbReference type="CDD" id="cd17754">
    <property type="entry name" value="MCM3"/>
    <property type="match status" value="1"/>
</dbReference>
<dbReference type="FunFam" id="2.20.28.10:FF:000008">
    <property type="entry name" value="DNA helicase"/>
    <property type="match status" value="1"/>
</dbReference>
<dbReference type="FunFam" id="3.30.1640.10:FF:000012">
    <property type="entry name" value="DNA helicase"/>
    <property type="match status" value="1"/>
</dbReference>
<dbReference type="Gene3D" id="2.20.28.10">
    <property type="match status" value="1"/>
</dbReference>
<dbReference type="Gene3D" id="3.30.1640.10">
    <property type="entry name" value="mini-chromosome maintenance (MCM) complex, chain A, domain 1"/>
    <property type="match status" value="1"/>
</dbReference>
<dbReference type="Gene3D" id="2.40.50.140">
    <property type="entry name" value="Nucleic acid-binding proteins"/>
    <property type="match status" value="1"/>
</dbReference>
<dbReference type="Gene3D" id="3.40.50.300">
    <property type="entry name" value="P-loop containing nucleotide triphosphate hydrolases"/>
    <property type="match status" value="1"/>
</dbReference>
<dbReference type="InterPro" id="IPR003593">
    <property type="entry name" value="AAA+_ATPase"/>
</dbReference>
<dbReference type="InterPro" id="IPR031327">
    <property type="entry name" value="MCM"/>
</dbReference>
<dbReference type="InterPro" id="IPR008046">
    <property type="entry name" value="Mcm3"/>
</dbReference>
<dbReference type="InterPro" id="IPR018525">
    <property type="entry name" value="MCM_CS"/>
</dbReference>
<dbReference type="InterPro" id="IPR001208">
    <property type="entry name" value="MCM_dom"/>
</dbReference>
<dbReference type="InterPro" id="IPR041562">
    <property type="entry name" value="MCM_lid"/>
</dbReference>
<dbReference type="InterPro" id="IPR027925">
    <property type="entry name" value="MCM_N"/>
</dbReference>
<dbReference type="InterPro" id="IPR033762">
    <property type="entry name" value="MCM_OB"/>
</dbReference>
<dbReference type="InterPro" id="IPR012340">
    <property type="entry name" value="NA-bd_OB-fold"/>
</dbReference>
<dbReference type="InterPro" id="IPR027417">
    <property type="entry name" value="P-loop_NTPase"/>
</dbReference>
<dbReference type="InterPro" id="IPR056575">
    <property type="entry name" value="WH_MCM3_C"/>
</dbReference>
<dbReference type="PANTHER" id="PTHR11630">
    <property type="entry name" value="DNA REPLICATION LICENSING FACTOR MCM FAMILY MEMBER"/>
    <property type="match status" value="1"/>
</dbReference>
<dbReference type="PANTHER" id="PTHR11630:SF46">
    <property type="entry name" value="DNA REPLICATION LICENSING FACTOR MCM3-RELATED"/>
    <property type="match status" value="1"/>
</dbReference>
<dbReference type="Pfam" id="PF00493">
    <property type="entry name" value="MCM"/>
    <property type="match status" value="1"/>
</dbReference>
<dbReference type="Pfam" id="PF17855">
    <property type="entry name" value="MCM_lid"/>
    <property type="match status" value="1"/>
</dbReference>
<dbReference type="Pfam" id="PF14551">
    <property type="entry name" value="MCM_N"/>
    <property type="match status" value="1"/>
</dbReference>
<dbReference type="Pfam" id="PF17207">
    <property type="entry name" value="MCM_OB"/>
    <property type="match status" value="1"/>
</dbReference>
<dbReference type="Pfam" id="PF23191">
    <property type="entry name" value="WH_MCM3_C"/>
    <property type="match status" value="1"/>
</dbReference>
<dbReference type="PRINTS" id="PR01657">
    <property type="entry name" value="MCMFAMILY"/>
</dbReference>
<dbReference type="PRINTS" id="PR01659">
    <property type="entry name" value="MCMPROTEIN3"/>
</dbReference>
<dbReference type="SMART" id="SM00382">
    <property type="entry name" value="AAA"/>
    <property type="match status" value="1"/>
</dbReference>
<dbReference type="SMART" id="SM00350">
    <property type="entry name" value="MCM"/>
    <property type="match status" value="1"/>
</dbReference>
<dbReference type="SUPFAM" id="SSF50249">
    <property type="entry name" value="Nucleic acid-binding proteins"/>
    <property type="match status" value="1"/>
</dbReference>
<dbReference type="SUPFAM" id="SSF52540">
    <property type="entry name" value="P-loop containing nucleoside triphosphate hydrolases"/>
    <property type="match status" value="1"/>
</dbReference>
<dbReference type="PROSITE" id="PS00847">
    <property type="entry name" value="MCM_1"/>
    <property type="match status" value="1"/>
</dbReference>
<dbReference type="PROSITE" id="PS50051">
    <property type="entry name" value="MCM_2"/>
    <property type="match status" value="1"/>
</dbReference>
<gene>
    <name type="primary">ROA2</name>
</gene>
<comment type="function">
    <text evidence="1">Acts as a factor that allows the DNA to undergo a single round of replication per cell cycle. Required for DNA replication and cell proliferation (By similarity). May act as a component of the MCM complex which is the putative replicative helicase of the replication licensing system in eukaryotic cells.</text>
</comment>
<comment type="catalytic activity">
    <reaction>
        <text>ATP + H2O = ADP + phosphate + H(+)</text>
        <dbReference type="Rhea" id="RHEA:13065"/>
        <dbReference type="ChEBI" id="CHEBI:15377"/>
        <dbReference type="ChEBI" id="CHEBI:15378"/>
        <dbReference type="ChEBI" id="CHEBI:30616"/>
        <dbReference type="ChEBI" id="CHEBI:43474"/>
        <dbReference type="ChEBI" id="CHEBI:456216"/>
        <dbReference type="EC" id="3.6.4.12"/>
    </reaction>
</comment>
<comment type="subcellular location">
    <subcellularLocation>
        <location evidence="4">Nucleus</location>
    </subcellularLocation>
</comment>
<comment type="similarity">
    <text evidence="4">Belongs to the MCM family.</text>
</comment>
<name>MCM32_MAIZE</name>
<reference key="1">
    <citation type="journal article" date="1999" name="J. Exp. Bot.">
        <title>cDNA and promoter sequences for MCM3 homologues from maize, and protein localization in cycling cells.</title>
        <authorList>
            <person name="Sabelli P.A."/>
            <person name="Parker J.S."/>
            <person name="Barlow P.W."/>
        </authorList>
    </citation>
    <scope>NUCLEOTIDE SEQUENCE [MRNA]</scope>
    <source>
        <strain>cv. LG11</strain>
        <tissue>Root</tissue>
    </source>
</reference>
<protein>
    <recommendedName>
        <fullName>DNA replication licensing factor MCM3 homolog 2</fullName>
        <ecNumber>3.6.4.12</ecNumber>
    </recommendedName>
    <alternativeName>
        <fullName>Replication origin activator 2</fullName>
        <shortName>ROA-2</shortName>
    </alternativeName>
</protein>
<sequence>MEINEEAMAAHKRAFLDFLDQDVGKGVYMQAVRDMVQNKRHRLIIGMDDLRNHNLDLARRVIRTPGEYMQPASDAVSEVARNLDPKFLKEGERVMVGFSGPFGFHRVTPRDLMSSFIGTMVCVEGIVTKCSLVRPKVVKSVHFCPVTGDFLSREYRDITSFVGLPTGSVYPTRDDNGNLLVTEYGMCEYKDHQTLSMQEVPENSAPGQLPRTVDVIVEDDLVDCCKPGDRVSIVGVYKALPGKSKGSVSGVFRTVLIANNVSLLNKEANAPVYTREDLKRMKEISRRNDTFDLLGNSLAPSIYGHLWIKKAVVLLMLGGVEKNLKNGTHLRGDINMMMVGDPSVAKSQLLRAVMNIAPLAISTTGRGSSGVGLTAAVTSDQETGERRLEAGAMVLADRGVVCIDEFDKMNDQDRVAIHEVMEQQTVTIAKAGIHASLNARCSVIAAANPIYGTYDRSLTPTKNIGLPDSLLSRFDLLFIVLDQMDPEIDRQISEHVARMHRYCTDDGGARSLDKEGYAEEDDGDANAAIFVKYDRMLHGQDRRRGKKSKQDRLTVKFLKKYIHYAKNLIQPRLTDEASDHIATSYAELRDGSANAKSGGGTLPITARTLETIIRLSTAHAKMKLRHEVLKSDVEAALQVLNFAIYHKELTEMEEREQREMEMKQQADHDAGATGGTVDGHGSSGNDPMDVDVGSNDQNVSAERIEAFEALLGQHVLANHIDQMSIDDIEQMVNRESTAPYTRSQVEFILERMQDANRVMIRDGVVRII</sequence>